<name>RL2_ACIBS</name>
<feature type="chain" id="PRO_1000141491" description="Large ribosomal subunit protein uL2">
    <location>
        <begin position="1"/>
        <end position="274"/>
    </location>
</feature>
<feature type="region of interest" description="Disordered" evidence="2">
    <location>
        <begin position="38"/>
        <end position="57"/>
    </location>
</feature>
<feature type="region of interest" description="Disordered" evidence="2">
    <location>
        <begin position="224"/>
        <end position="256"/>
    </location>
</feature>
<feature type="compositionally biased region" description="Basic and acidic residues" evidence="2">
    <location>
        <begin position="229"/>
        <end position="239"/>
    </location>
</feature>
<reference key="1">
    <citation type="journal article" date="2008" name="PLoS ONE">
        <title>Comparative analysis of Acinetobacters: three genomes for three lifestyles.</title>
        <authorList>
            <person name="Vallenet D."/>
            <person name="Nordmann P."/>
            <person name="Barbe V."/>
            <person name="Poirel L."/>
            <person name="Mangenot S."/>
            <person name="Bataille E."/>
            <person name="Dossat C."/>
            <person name="Gas S."/>
            <person name="Kreimeyer A."/>
            <person name="Lenoble P."/>
            <person name="Oztas S."/>
            <person name="Poulain J."/>
            <person name="Segurens B."/>
            <person name="Robert C."/>
            <person name="Abergel C."/>
            <person name="Claverie J.-M."/>
            <person name="Raoult D."/>
            <person name="Medigue C."/>
            <person name="Weissenbach J."/>
            <person name="Cruveiller S."/>
        </authorList>
    </citation>
    <scope>NUCLEOTIDE SEQUENCE [LARGE SCALE GENOMIC DNA]</scope>
    <source>
        <strain>SDF</strain>
    </source>
</reference>
<sequence length="274" mass="30280">MPIQKCKPTSPGRRFVEKVVHDHLHKGAPYAPLVEAKKRTGGRNNNGHITTRHVGGGHKQHYRIVDFKRNKDGVPAVVERIEYDPNRTAHIALLKYADGERRYIIAPKGLRAGDKVQSGNDAPIRPGNCLPLRNMPIGSTLHNVELKIGKGAQLARSAGASVQLLGRDGSYAIIRLRSGEMRKVHVECRAVIGEVSNQENNLRSLGKAGAARWRGVRPTVRGMAMNPIDHPHGGGEGRNKGIQPVSPWGQKAKGYKTRTNKRTTKMIIRDRRVK</sequence>
<accession>B0VQS1</accession>
<gene>
    <name evidence="1" type="primary">rplB</name>
    <name type="ordered locus">ABSDF0426</name>
</gene>
<keyword id="KW-0687">Ribonucleoprotein</keyword>
<keyword id="KW-0689">Ribosomal protein</keyword>
<keyword id="KW-0694">RNA-binding</keyword>
<keyword id="KW-0699">rRNA-binding</keyword>
<proteinExistence type="inferred from homology"/>
<organism>
    <name type="scientific">Acinetobacter baumannii (strain SDF)</name>
    <dbReference type="NCBI Taxonomy" id="509170"/>
    <lineage>
        <taxon>Bacteria</taxon>
        <taxon>Pseudomonadati</taxon>
        <taxon>Pseudomonadota</taxon>
        <taxon>Gammaproteobacteria</taxon>
        <taxon>Moraxellales</taxon>
        <taxon>Moraxellaceae</taxon>
        <taxon>Acinetobacter</taxon>
        <taxon>Acinetobacter calcoaceticus/baumannii complex</taxon>
    </lineage>
</organism>
<dbReference type="EMBL" id="CU468230">
    <property type="protein sequence ID" value="CAO99817.1"/>
    <property type="molecule type" value="Genomic_DNA"/>
</dbReference>
<dbReference type="SMR" id="B0VQS1"/>
<dbReference type="KEGG" id="abm:ABSDF0426"/>
<dbReference type="HOGENOM" id="CLU_036235_2_1_6"/>
<dbReference type="Proteomes" id="UP000001741">
    <property type="component" value="Chromosome"/>
</dbReference>
<dbReference type="GO" id="GO:0015934">
    <property type="term" value="C:large ribosomal subunit"/>
    <property type="evidence" value="ECO:0007669"/>
    <property type="project" value="InterPro"/>
</dbReference>
<dbReference type="GO" id="GO:0019843">
    <property type="term" value="F:rRNA binding"/>
    <property type="evidence" value="ECO:0007669"/>
    <property type="project" value="UniProtKB-UniRule"/>
</dbReference>
<dbReference type="GO" id="GO:0003735">
    <property type="term" value="F:structural constituent of ribosome"/>
    <property type="evidence" value="ECO:0007669"/>
    <property type="project" value="InterPro"/>
</dbReference>
<dbReference type="GO" id="GO:0016740">
    <property type="term" value="F:transferase activity"/>
    <property type="evidence" value="ECO:0007669"/>
    <property type="project" value="InterPro"/>
</dbReference>
<dbReference type="GO" id="GO:0002181">
    <property type="term" value="P:cytoplasmic translation"/>
    <property type="evidence" value="ECO:0007669"/>
    <property type="project" value="TreeGrafter"/>
</dbReference>
<dbReference type="FunFam" id="2.30.30.30:FF:000001">
    <property type="entry name" value="50S ribosomal protein L2"/>
    <property type="match status" value="1"/>
</dbReference>
<dbReference type="FunFam" id="2.40.50.140:FF:000003">
    <property type="entry name" value="50S ribosomal protein L2"/>
    <property type="match status" value="1"/>
</dbReference>
<dbReference type="FunFam" id="4.10.950.10:FF:000001">
    <property type="entry name" value="50S ribosomal protein L2"/>
    <property type="match status" value="1"/>
</dbReference>
<dbReference type="Gene3D" id="2.30.30.30">
    <property type="match status" value="1"/>
</dbReference>
<dbReference type="Gene3D" id="2.40.50.140">
    <property type="entry name" value="Nucleic acid-binding proteins"/>
    <property type="match status" value="1"/>
</dbReference>
<dbReference type="Gene3D" id="4.10.950.10">
    <property type="entry name" value="Ribosomal protein L2, domain 3"/>
    <property type="match status" value="1"/>
</dbReference>
<dbReference type="HAMAP" id="MF_01320_B">
    <property type="entry name" value="Ribosomal_uL2_B"/>
    <property type="match status" value="1"/>
</dbReference>
<dbReference type="InterPro" id="IPR012340">
    <property type="entry name" value="NA-bd_OB-fold"/>
</dbReference>
<dbReference type="InterPro" id="IPR014722">
    <property type="entry name" value="Rib_uL2_dom2"/>
</dbReference>
<dbReference type="InterPro" id="IPR002171">
    <property type="entry name" value="Ribosomal_uL2"/>
</dbReference>
<dbReference type="InterPro" id="IPR005880">
    <property type="entry name" value="Ribosomal_uL2_bac/org-type"/>
</dbReference>
<dbReference type="InterPro" id="IPR022669">
    <property type="entry name" value="Ribosomal_uL2_C"/>
</dbReference>
<dbReference type="InterPro" id="IPR014726">
    <property type="entry name" value="Ribosomal_uL2_dom3"/>
</dbReference>
<dbReference type="InterPro" id="IPR022666">
    <property type="entry name" value="Ribosomal_uL2_RNA-bd_dom"/>
</dbReference>
<dbReference type="InterPro" id="IPR008991">
    <property type="entry name" value="Translation_prot_SH3-like_sf"/>
</dbReference>
<dbReference type="NCBIfam" id="TIGR01171">
    <property type="entry name" value="rplB_bact"/>
    <property type="match status" value="1"/>
</dbReference>
<dbReference type="PANTHER" id="PTHR13691:SF5">
    <property type="entry name" value="LARGE RIBOSOMAL SUBUNIT PROTEIN UL2M"/>
    <property type="match status" value="1"/>
</dbReference>
<dbReference type="PANTHER" id="PTHR13691">
    <property type="entry name" value="RIBOSOMAL PROTEIN L2"/>
    <property type="match status" value="1"/>
</dbReference>
<dbReference type="Pfam" id="PF00181">
    <property type="entry name" value="Ribosomal_L2"/>
    <property type="match status" value="1"/>
</dbReference>
<dbReference type="Pfam" id="PF03947">
    <property type="entry name" value="Ribosomal_L2_C"/>
    <property type="match status" value="1"/>
</dbReference>
<dbReference type="PIRSF" id="PIRSF002158">
    <property type="entry name" value="Ribosomal_L2"/>
    <property type="match status" value="1"/>
</dbReference>
<dbReference type="SMART" id="SM01383">
    <property type="entry name" value="Ribosomal_L2"/>
    <property type="match status" value="1"/>
</dbReference>
<dbReference type="SMART" id="SM01382">
    <property type="entry name" value="Ribosomal_L2_C"/>
    <property type="match status" value="1"/>
</dbReference>
<dbReference type="SUPFAM" id="SSF50249">
    <property type="entry name" value="Nucleic acid-binding proteins"/>
    <property type="match status" value="1"/>
</dbReference>
<dbReference type="SUPFAM" id="SSF50104">
    <property type="entry name" value="Translation proteins SH3-like domain"/>
    <property type="match status" value="1"/>
</dbReference>
<comment type="function">
    <text evidence="1">One of the primary rRNA binding proteins. Required for association of the 30S and 50S subunits to form the 70S ribosome, for tRNA binding and peptide bond formation. It has been suggested to have peptidyltransferase activity; this is somewhat controversial. Makes several contacts with the 16S rRNA in the 70S ribosome.</text>
</comment>
<comment type="subunit">
    <text evidence="1">Part of the 50S ribosomal subunit. Forms a bridge to the 30S subunit in the 70S ribosome.</text>
</comment>
<comment type="similarity">
    <text evidence="1">Belongs to the universal ribosomal protein uL2 family.</text>
</comment>
<evidence type="ECO:0000255" key="1">
    <source>
        <dbReference type="HAMAP-Rule" id="MF_01320"/>
    </source>
</evidence>
<evidence type="ECO:0000256" key="2">
    <source>
        <dbReference type="SAM" id="MobiDB-lite"/>
    </source>
</evidence>
<evidence type="ECO:0000305" key="3"/>
<protein>
    <recommendedName>
        <fullName evidence="1">Large ribosomal subunit protein uL2</fullName>
    </recommendedName>
    <alternativeName>
        <fullName evidence="3">50S ribosomal protein L2</fullName>
    </alternativeName>
</protein>